<keyword id="KW-0244">Early protein</keyword>
<keyword id="KW-0325">Glycoprotein</keyword>
<keyword id="KW-0732">Signal</keyword>
<keyword id="KW-0946">Virion</keyword>
<reference key="1">
    <citation type="journal article" date="2008" name="J. Gen. Virol.">
        <title>Comparison of the genome sequences of non-pathogenic and pathogenic African swine fever virus isolates.</title>
        <authorList>
            <person name="Chapman D.A.G."/>
            <person name="Tcherepanov V."/>
            <person name="Upton C."/>
            <person name="Dixon L.K."/>
        </authorList>
    </citation>
    <scope>NUCLEOTIDE SEQUENCE [LARGE SCALE GENOMIC DNA]</scope>
    <source>
        <strain evidence="5">OURT 88/3</strain>
    </source>
</reference>
<reference key="2">
    <citation type="journal article" date="2018" name="Sci. Rep.">
        <title>The intracellular proteome of African swine fever virus.</title>
        <authorList>
            <person name="Kessler C."/>
            <person name="Forth J.H."/>
            <person name="Keil G.M."/>
            <person name="Mettenleiter T.C."/>
            <person name="Blome S."/>
            <person name="Karger A."/>
        </authorList>
    </citation>
    <scope>SIGNAL SEQUENCE CLEAVAGE SITE</scope>
</reference>
<comment type="function">
    <text evidence="1">Causes the redistribution of lumenal ER protein to an enlarged ERGIC compartment.</text>
</comment>
<comment type="subcellular location">
    <subcellularLocation>
        <location evidence="1">Virion</location>
    </subcellularLocation>
    <subcellularLocation>
        <location evidence="1">Host endoplasmic reticulum-Golgi intermediate compartment</location>
    </subcellularLocation>
</comment>
<comment type="similarity">
    <text evidence="4">Belongs to the asfivirus MGF 110 family.</text>
</comment>
<accession>A9JLI5</accession>
<proteinExistence type="evidence at protein level"/>
<protein>
    <recommendedName>
        <fullName>Protein MGF 110-4L</fullName>
    </recommendedName>
</protein>
<feature type="signal peptide" evidence="3">
    <location>
        <begin position="1"/>
        <end position="28"/>
    </location>
</feature>
<feature type="chain" id="PRO_0000454842" description="Protein MGF 110-4L">
    <location>
        <begin position="29"/>
        <end position="124"/>
    </location>
</feature>
<feature type="short sequence motif" description="Prevents secretion from ER" evidence="1">
    <location>
        <begin position="121"/>
        <end position="124"/>
    </location>
</feature>
<feature type="glycosylation site" description="N-linked (GlcNAc...) asparagine; by host" evidence="2">
    <location>
        <position position="64"/>
    </location>
</feature>
<name>1104L_ASFPP</name>
<sequence length="124" mass="14452">MLVIFLGILGLLANQVLGLPTQAEGHLRSTDNPPQEELGYWCTYMESCKFCWECEHGICKNKVNRSMPWIIENSYLTSCEVSRWYNQCTYDEGNGHYHVMDCSNPVPHNRPHRLGRKIYEKEDL</sequence>
<organismHost>
    <name type="scientific">Ornithodoros</name>
    <name type="common">relapsing fever ticks</name>
    <dbReference type="NCBI Taxonomy" id="6937"/>
</organismHost>
<organismHost>
    <name type="scientific">Sus scrofa</name>
    <name type="common">Pig</name>
    <dbReference type="NCBI Taxonomy" id="9823"/>
</organismHost>
<organism>
    <name type="scientific">African swine fever virus (isolate Pig/Portugal/OURT88/1988)</name>
    <name type="common">ASFV</name>
    <dbReference type="NCBI Taxonomy" id="443878"/>
    <lineage>
        <taxon>Viruses</taxon>
        <taxon>Varidnaviria</taxon>
        <taxon>Bamfordvirae</taxon>
        <taxon>Nucleocytoviricota</taxon>
        <taxon>Pokkesviricetes</taxon>
        <taxon>Asfuvirales</taxon>
        <taxon>Asfarviridae</taxon>
        <taxon>Asfivirus</taxon>
        <taxon>African swine fever virus</taxon>
    </lineage>
</organism>
<evidence type="ECO:0000250" key="1">
    <source>
        <dbReference type="UniProtKB" id="P18558"/>
    </source>
</evidence>
<evidence type="ECO:0000255" key="2"/>
<evidence type="ECO:0000269" key="3">
    <source>
    </source>
</evidence>
<evidence type="ECO:0000305" key="4"/>
<evidence type="ECO:0000312" key="5">
    <source>
        <dbReference type="EMBL" id="CAN10358.1"/>
    </source>
</evidence>
<gene>
    <name evidence="5" type="primary">MGF 110-4L</name>
</gene>
<dbReference type="EMBL" id="AM712240">
    <property type="protein sequence ID" value="CAN10358.1"/>
    <property type="molecule type" value="Genomic_DNA"/>
</dbReference>
<dbReference type="RefSeq" id="YP_009703618.1">
    <property type="nucleotide sequence ID" value="NC_044957.1"/>
</dbReference>
<dbReference type="GlyCosmos" id="A9JLI5">
    <property type="glycosylation" value="1 site, No reported glycans"/>
</dbReference>
<dbReference type="GeneID" id="41902427"/>
<dbReference type="Proteomes" id="UP000108903">
    <property type="component" value="Segment"/>
</dbReference>
<dbReference type="GO" id="GO:0044172">
    <property type="term" value="C:host cell endoplasmic reticulum-Golgi intermediate compartment"/>
    <property type="evidence" value="ECO:0007669"/>
    <property type="project" value="UniProtKB-SubCell"/>
</dbReference>
<dbReference type="GO" id="GO:0044423">
    <property type="term" value="C:virion component"/>
    <property type="evidence" value="ECO:0007669"/>
    <property type="project" value="UniProtKB-KW"/>
</dbReference>
<dbReference type="InterPro" id="IPR004848">
    <property type="entry name" value="ASFV_fam_110"/>
</dbReference>
<dbReference type="Pfam" id="PF01639">
    <property type="entry name" value="v110"/>
    <property type="match status" value="1"/>
</dbReference>